<evidence type="ECO:0000255" key="1">
    <source>
        <dbReference type="HAMAP-Rule" id="MF_00298"/>
    </source>
</evidence>
<feature type="chain" id="PRO_0000231928" description="RNA pyrophosphohydrolase">
    <location>
        <begin position="1"/>
        <end position="173"/>
    </location>
</feature>
<feature type="domain" description="Nudix hydrolase" evidence="1">
    <location>
        <begin position="6"/>
        <end position="149"/>
    </location>
</feature>
<feature type="short sequence motif" description="Nudix box">
    <location>
        <begin position="38"/>
        <end position="59"/>
    </location>
</feature>
<organism>
    <name type="scientific">Psychrobacter arcticus (strain DSM 17307 / VKM B-2377 / 273-4)</name>
    <dbReference type="NCBI Taxonomy" id="259536"/>
    <lineage>
        <taxon>Bacteria</taxon>
        <taxon>Pseudomonadati</taxon>
        <taxon>Pseudomonadota</taxon>
        <taxon>Gammaproteobacteria</taxon>
        <taxon>Moraxellales</taxon>
        <taxon>Moraxellaceae</taxon>
        <taxon>Psychrobacter</taxon>
    </lineage>
</organism>
<gene>
    <name evidence="1" type="primary">rppH</name>
    <name evidence="1" type="synonym">nudH</name>
    <name type="ordered locus">Psyc_2007</name>
</gene>
<name>RPPH_PSYA2</name>
<reference key="1">
    <citation type="journal article" date="2010" name="Appl. Environ. Microbiol.">
        <title>The genome sequence of Psychrobacter arcticus 273-4, a psychroactive Siberian permafrost bacterium, reveals mechanisms for adaptation to low-temperature growth.</title>
        <authorList>
            <person name="Ayala-del-Rio H.L."/>
            <person name="Chain P.S."/>
            <person name="Grzymski J.J."/>
            <person name="Ponder M.A."/>
            <person name="Ivanova N."/>
            <person name="Bergholz P.W."/>
            <person name="Di Bartolo G."/>
            <person name="Hauser L."/>
            <person name="Land M."/>
            <person name="Bakermans C."/>
            <person name="Rodrigues D."/>
            <person name="Klappenbach J."/>
            <person name="Zarka D."/>
            <person name="Larimer F."/>
            <person name="Richardson P."/>
            <person name="Murray A."/>
            <person name="Thomashow M."/>
            <person name="Tiedje J.M."/>
        </authorList>
    </citation>
    <scope>NUCLEOTIDE SEQUENCE [LARGE SCALE GENOMIC DNA]</scope>
    <source>
        <strain>DSM 17307 / VKM B-2377 / 273-4</strain>
    </source>
</reference>
<comment type="function">
    <text evidence="1">Accelerates the degradation of transcripts by removing pyrophosphate from the 5'-end of triphosphorylated RNA, leading to a more labile monophosphorylated state that can stimulate subsequent ribonuclease cleavage.</text>
</comment>
<comment type="cofactor">
    <cofactor evidence="1">
        <name>a divalent metal cation</name>
        <dbReference type="ChEBI" id="CHEBI:60240"/>
    </cofactor>
</comment>
<comment type="similarity">
    <text evidence="1">Belongs to the Nudix hydrolase family. RppH subfamily.</text>
</comment>
<keyword id="KW-0378">Hydrolase</keyword>
<keyword id="KW-1185">Reference proteome</keyword>
<accession>Q4FQ54</accession>
<protein>
    <recommendedName>
        <fullName evidence="1">RNA pyrophosphohydrolase</fullName>
        <ecNumber evidence="1">3.6.1.-</ecNumber>
    </recommendedName>
    <alternativeName>
        <fullName evidence="1">(Di)nucleoside polyphosphate hydrolase</fullName>
    </alternativeName>
</protein>
<proteinExistence type="inferred from homology"/>
<sequence>MIDADGFRANVGIILANTQGQVLWAKRIGHNAWQFPQGGIDRGETPMDAMYRELWEEVGLHPRHVDLLAVTQDWLRYRLPKRYVRHGQYPLCIGQKQKWFLLRLDEPNTQHIRFDEGKAEFDNWQWVSYWYPLGQVIHFKRGVYRRALQELVPELPLQQGLIIPEQNNHLLQF</sequence>
<dbReference type="EC" id="3.6.1.-" evidence="1"/>
<dbReference type="EMBL" id="CP000082">
    <property type="protein sequence ID" value="AAZ19854.1"/>
    <property type="molecule type" value="Genomic_DNA"/>
</dbReference>
<dbReference type="RefSeq" id="WP_011281262.1">
    <property type="nucleotide sequence ID" value="NC_007204.1"/>
</dbReference>
<dbReference type="SMR" id="Q4FQ54"/>
<dbReference type="STRING" id="259536.Psyc_2007"/>
<dbReference type="KEGG" id="par:Psyc_2007"/>
<dbReference type="eggNOG" id="COG0494">
    <property type="taxonomic scope" value="Bacteria"/>
</dbReference>
<dbReference type="HOGENOM" id="CLU_087195_3_1_6"/>
<dbReference type="OrthoDB" id="9816040at2"/>
<dbReference type="Proteomes" id="UP000000546">
    <property type="component" value="Chromosome"/>
</dbReference>
<dbReference type="GO" id="GO:0016462">
    <property type="term" value="F:pyrophosphatase activity"/>
    <property type="evidence" value="ECO:0007669"/>
    <property type="project" value="UniProtKB-ARBA"/>
</dbReference>
<dbReference type="CDD" id="cd03671">
    <property type="entry name" value="NUDIX_Ap4A_hydrolase_plant_like"/>
    <property type="match status" value="1"/>
</dbReference>
<dbReference type="FunFam" id="3.90.79.10:FF:000001">
    <property type="entry name" value="RNA pyrophosphohydrolase"/>
    <property type="match status" value="1"/>
</dbReference>
<dbReference type="Gene3D" id="3.90.79.10">
    <property type="entry name" value="Nucleoside Triphosphate Pyrophosphohydrolase"/>
    <property type="match status" value="1"/>
</dbReference>
<dbReference type="HAMAP" id="MF_00298">
    <property type="entry name" value="Nudix_RppH"/>
    <property type="match status" value="1"/>
</dbReference>
<dbReference type="InterPro" id="IPR020476">
    <property type="entry name" value="Nudix_hydrolase"/>
</dbReference>
<dbReference type="InterPro" id="IPR015797">
    <property type="entry name" value="NUDIX_hydrolase-like_dom_sf"/>
</dbReference>
<dbReference type="InterPro" id="IPR020084">
    <property type="entry name" value="NUDIX_hydrolase_CS"/>
</dbReference>
<dbReference type="InterPro" id="IPR000086">
    <property type="entry name" value="NUDIX_hydrolase_dom"/>
</dbReference>
<dbReference type="InterPro" id="IPR022927">
    <property type="entry name" value="RppH"/>
</dbReference>
<dbReference type="NCBIfam" id="NF001934">
    <property type="entry name" value="PRK00714.1-1"/>
    <property type="match status" value="1"/>
</dbReference>
<dbReference type="NCBIfam" id="NF001937">
    <property type="entry name" value="PRK00714.1-4"/>
    <property type="match status" value="1"/>
</dbReference>
<dbReference type="NCBIfam" id="NF001938">
    <property type="entry name" value="PRK00714.1-5"/>
    <property type="match status" value="1"/>
</dbReference>
<dbReference type="PANTHER" id="PTHR43736">
    <property type="entry name" value="ADP-RIBOSE PYROPHOSPHATASE"/>
    <property type="match status" value="1"/>
</dbReference>
<dbReference type="PANTHER" id="PTHR43736:SF1">
    <property type="entry name" value="DIHYDRONEOPTERIN TRIPHOSPHATE DIPHOSPHATASE"/>
    <property type="match status" value="1"/>
</dbReference>
<dbReference type="Pfam" id="PF00293">
    <property type="entry name" value="NUDIX"/>
    <property type="match status" value="1"/>
</dbReference>
<dbReference type="PRINTS" id="PR00502">
    <property type="entry name" value="NUDIXFAMILY"/>
</dbReference>
<dbReference type="SUPFAM" id="SSF55811">
    <property type="entry name" value="Nudix"/>
    <property type="match status" value="1"/>
</dbReference>
<dbReference type="PROSITE" id="PS51462">
    <property type="entry name" value="NUDIX"/>
    <property type="match status" value="1"/>
</dbReference>
<dbReference type="PROSITE" id="PS00893">
    <property type="entry name" value="NUDIX_BOX"/>
    <property type="match status" value="1"/>
</dbReference>